<gene>
    <name evidence="1" type="primary">rnhB</name>
    <name type="ordered locus">BURPS668_2422</name>
</gene>
<organism>
    <name type="scientific">Burkholderia pseudomallei (strain 668)</name>
    <dbReference type="NCBI Taxonomy" id="320373"/>
    <lineage>
        <taxon>Bacteria</taxon>
        <taxon>Pseudomonadati</taxon>
        <taxon>Pseudomonadota</taxon>
        <taxon>Betaproteobacteria</taxon>
        <taxon>Burkholderiales</taxon>
        <taxon>Burkholderiaceae</taxon>
        <taxon>Burkholderia</taxon>
        <taxon>pseudomallei group</taxon>
    </lineage>
</organism>
<comment type="function">
    <text evidence="1">Endonuclease that specifically degrades the RNA of RNA-DNA hybrids.</text>
</comment>
<comment type="catalytic activity">
    <reaction evidence="1">
        <text>Endonucleolytic cleavage to 5'-phosphomonoester.</text>
        <dbReference type="EC" id="3.1.26.4"/>
    </reaction>
</comment>
<comment type="cofactor">
    <cofactor evidence="1">
        <name>Mn(2+)</name>
        <dbReference type="ChEBI" id="CHEBI:29035"/>
    </cofactor>
    <cofactor evidence="1">
        <name>Mg(2+)</name>
        <dbReference type="ChEBI" id="CHEBI:18420"/>
    </cofactor>
    <text evidence="1">Manganese or magnesium. Binds 1 divalent metal ion per monomer in the absence of substrate. May bind a second metal ion after substrate binding.</text>
</comment>
<comment type="subcellular location">
    <subcellularLocation>
        <location evidence="1">Cytoplasm</location>
    </subcellularLocation>
</comment>
<comment type="similarity">
    <text evidence="1">Belongs to the RNase HII family.</text>
</comment>
<sequence>MATTRKPRGGAGGATQPALDFDAPGEIVCGVDEAGRGPLAGPVVAAAVVLDPARPIVGLDDSKALSAKKRERLFDEIVVHALAYSVASASVEEIDSLNILHATMLAMKRAVEGLSVLPTLAKIDGNRCPMLAIRSEAIVGGDALVPSISAASILAKVTRDRMLVELHQQFPMYGFDAHAGYGTPQHLAALREHGPCEHHRRSFAPVREAFDLIR</sequence>
<feature type="chain" id="PRO_1000031128" description="Ribonuclease HII">
    <location>
        <begin position="1"/>
        <end position="214"/>
    </location>
</feature>
<feature type="domain" description="RNase H type-2" evidence="2">
    <location>
        <begin position="26"/>
        <end position="214"/>
    </location>
</feature>
<feature type="binding site" evidence="1">
    <location>
        <position position="32"/>
    </location>
    <ligand>
        <name>a divalent metal cation</name>
        <dbReference type="ChEBI" id="CHEBI:60240"/>
    </ligand>
</feature>
<feature type="binding site" evidence="1">
    <location>
        <position position="33"/>
    </location>
    <ligand>
        <name>a divalent metal cation</name>
        <dbReference type="ChEBI" id="CHEBI:60240"/>
    </ligand>
</feature>
<feature type="binding site" evidence="1">
    <location>
        <position position="124"/>
    </location>
    <ligand>
        <name>a divalent metal cation</name>
        <dbReference type="ChEBI" id="CHEBI:60240"/>
    </ligand>
</feature>
<proteinExistence type="inferred from homology"/>
<dbReference type="EC" id="3.1.26.4" evidence="1"/>
<dbReference type="EMBL" id="CP000570">
    <property type="protein sequence ID" value="ABN84922.1"/>
    <property type="molecule type" value="Genomic_DNA"/>
</dbReference>
<dbReference type="RefSeq" id="WP_004534532.1">
    <property type="nucleotide sequence ID" value="NC_009074.1"/>
</dbReference>
<dbReference type="SMR" id="A3NAT3"/>
<dbReference type="KEGG" id="bpd:BURPS668_2422"/>
<dbReference type="HOGENOM" id="CLU_036532_3_2_4"/>
<dbReference type="GO" id="GO:0005737">
    <property type="term" value="C:cytoplasm"/>
    <property type="evidence" value="ECO:0007669"/>
    <property type="project" value="UniProtKB-SubCell"/>
</dbReference>
<dbReference type="GO" id="GO:0032299">
    <property type="term" value="C:ribonuclease H2 complex"/>
    <property type="evidence" value="ECO:0007669"/>
    <property type="project" value="TreeGrafter"/>
</dbReference>
<dbReference type="GO" id="GO:0030145">
    <property type="term" value="F:manganese ion binding"/>
    <property type="evidence" value="ECO:0007669"/>
    <property type="project" value="UniProtKB-UniRule"/>
</dbReference>
<dbReference type="GO" id="GO:0003723">
    <property type="term" value="F:RNA binding"/>
    <property type="evidence" value="ECO:0007669"/>
    <property type="project" value="InterPro"/>
</dbReference>
<dbReference type="GO" id="GO:0004523">
    <property type="term" value="F:RNA-DNA hybrid ribonuclease activity"/>
    <property type="evidence" value="ECO:0007669"/>
    <property type="project" value="UniProtKB-UniRule"/>
</dbReference>
<dbReference type="GO" id="GO:0043137">
    <property type="term" value="P:DNA replication, removal of RNA primer"/>
    <property type="evidence" value="ECO:0007669"/>
    <property type="project" value="TreeGrafter"/>
</dbReference>
<dbReference type="GO" id="GO:0006298">
    <property type="term" value="P:mismatch repair"/>
    <property type="evidence" value="ECO:0007669"/>
    <property type="project" value="TreeGrafter"/>
</dbReference>
<dbReference type="CDD" id="cd07182">
    <property type="entry name" value="RNase_HII_bacteria_HII_like"/>
    <property type="match status" value="1"/>
</dbReference>
<dbReference type="FunFam" id="3.30.420.10:FF:000006">
    <property type="entry name" value="Ribonuclease HII"/>
    <property type="match status" value="1"/>
</dbReference>
<dbReference type="Gene3D" id="3.30.420.10">
    <property type="entry name" value="Ribonuclease H-like superfamily/Ribonuclease H"/>
    <property type="match status" value="1"/>
</dbReference>
<dbReference type="HAMAP" id="MF_00052_B">
    <property type="entry name" value="RNase_HII_B"/>
    <property type="match status" value="1"/>
</dbReference>
<dbReference type="InterPro" id="IPR022898">
    <property type="entry name" value="RNase_HII"/>
</dbReference>
<dbReference type="InterPro" id="IPR001352">
    <property type="entry name" value="RNase_HII/HIII"/>
</dbReference>
<dbReference type="InterPro" id="IPR024567">
    <property type="entry name" value="RNase_HII/HIII_dom"/>
</dbReference>
<dbReference type="InterPro" id="IPR012337">
    <property type="entry name" value="RNaseH-like_sf"/>
</dbReference>
<dbReference type="InterPro" id="IPR036397">
    <property type="entry name" value="RNaseH_sf"/>
</dbReference>
<dbReference type="NCBIfam" id="NF000594">
    <property type="entry name" value="PRK00015.1-1"/>
    <property type="match status" value="1"/>
</dbReference>
<dbReference type="NCBIfam" id="NF000595">
    <property type="entry name" value="PRK00015.1-3"/>
    <property type="match status" value="1"/>
</dbReference>
<dbReference type="NCBIfam" id="NF000596">
    <property type="entry name" value="PRK00015.1-4"/>
    <property type="match status" value="1"/>
</dbReference>
<dbReference type="PANTHER" id="PTHR10954">
    <property type="entry name" value="RIBONUCLEASE H2 SUBUNIT A"/>
    <property type="match status" value="1"/>
</dbReference>
<dbReference type="PANTHER" id="PTHR10954:SF18">
    <property type="entry name" value="RIBONUCLEASE HII"/>
    <property type="match status" value="1"/>
</dbReference>
<dbReference type="Pfam" id="PF01351">
    <property type="entry name" value="RNase_HII"/>
    <property type="match status" value="1"/>
</dbReference>
<dbReference type="SUPFAM" id="SSF53098">
    <property type="entry name" value="Ribonuclease H-like"/>
    <property type="match status" value="1"/>
</dbReference>
<dbReference type="PROSITE" id="PS51975">
    <property type="entry name" value="RNASE_H_2"/>
    <property type="match status" value="1"/>
</dbReference>
<evidence type="ECO:0000255" key="1">
    <source>
        <dbReference type="HAMAP-Rule" id="MF_00052"/>
    </source>
</evidence>
<evidence type="ECO:0000255" key="2">
    <source>
        <dbReference type="PROSITE-ProRule" id="PRU01319"/>
    </source>
</evidence>
<keyword id="KW-0963">Cytoplasm</keyword>
<keyword id="KW-0255">Endonuclease</keyword>
<keyword id="KW-0378">Hydrolase</keyword>
<keyword id="KW-0464">Manganese</keyword>
<keyword id="KW-0479">Metal-binding</keyword>
<keyword id="KW-0540">Nuclease</keyword>
<protein>
    <recommendedName>
        <fullName evidence="1">Ribonuclease HII</fullName>
        <shortName evidence="1">RNase HII</shortName>
        <ecNumber evidence="1">3.1.26.4</ecNumber>
    </recommendedName>
</protein>
<name>RNH2_BURP6</name>
<reference key="1">
    <citation type="journal article" date="2010" name="Genome Biol. Evol.">
        <title>Continuing evolution of Burkholderia mallei through genome reduction and large-scale rearrangements.</title>
        <authorList>
            <person name="Losada L."/>
            <person name="Ronning C.M."/>
            <person name="DeShazer D."/>
            <person name="Woods D."/>
            <person name="Fedorova N."/>
            <person name="Kim H.S."/>
            <person name="Shabalina S.A."/>
            <person name="Pearson T.R."/>
            <person name="Brinkac L."/>
            <person name="Tan P."/>
            <person name="Nandi T."/>
            <person name="Crabtree J."/>
            <person name="Badger J."/>
            <person name="Beckstrom-Sternberg S."/>
            <person name="Saqib M."/>
            <person name="Schutzer S.E."/>
            <person name="Keim P."/>
            <person name="Nierman W.C."/>
        </authorList>
    </citation>
    <scope>NUCLEOTIDE SEQUENCE [LARGE SCALE GENOMIC DNA]</scope>
    <source>
        <strain>668</strain>
    </source>
</reference>
<accession>A3NAT3</accession>